<comment type="function">
    <text evidence="1">One of at least two accessory proteins for anaerobic nitric oxide (NO) reductase. Reduces the rubredoxin moiety of NO reductase.</text>
</comment>
<comment type="catalytic activity">
    <reaction evidence="1">
        <text>2 reduced [nitric oxide reductase rubredoxin domain] + NAD(+) + H(+) = 2 oxidized [nitric oxide reductase rubredoxin domain] + NADH</text>
        <dbReference type="Rhea" id="RHEA:42960"/>
        <dbReference type="Rhea" id="RHEA-COMP:10304"/>
        <dbReference type="Rhea" id="RHEA-COMP:10305"/>
        <dbReference type="ChEBI" id="CHEBI:15378"/>
        <dbReference type="ChEBI" id="CHEBI:29033"/>
        <dbReference type="ChEBI" id="CHEBI:29034"/>
        <dbReference type="ChEBI" id="CHEBI:57540"/>
        <dbReference type="ChEBI" id="CHEBI:57945"/>
    </reaction>
</comment>
<comment type="cofactor">
    <cofactor evidence="1">
        <name>FAD</name>
        <dbReference type="ChEBI" id="CHEBI:57692"/>
    </cofactor>
</comment>
<comment type="pathway">
    <text evidence="1">Nitrogen metabolism; nitric oxide reduction.</text>
</comment>
<comment type="subcellular location">
    <subcellularLocation>
        <location evidence="1">Cytoplasm</location>
    </subcellularLocation>
</comment>
<comment type="similarity">
    <text evidence="1">Belongs to the FAD-dependent oxidoreductase family.</text>
</comment>
<organism>
    <name type="scientific">Klebsiella pneumoniae subsp. pneumoniae (strain ATCC 700721 / MGH 78578)</name>
    <dbReference type="NCBI Taxonomy" id="272620"/>
    <lineage>
        <taxon>Bacteria</taxon>
        <taxon>Pseudomonadati</taxon>
        <taxon>Pseudomonadota</taxon>
        <taxon>Gammaproteobacteria</taxon>
        <taxon>Enterobacterales</taxon>
        <taxon>Enterobacteriaceae</taxon>
        <taxon>Klebsiella/Raoultella group</taxon>
        <taxon>Klebsiella</taxon>
        <taxon>Klebsiella pneumoniae complex</taxon>
    </lineage>
</organism>
<feature type="chain" id="PRO_0000341315" description="Nitric oxide reductase FlRd-NAD(+) reductase">
    <location>
        <begin position="1"/>
        <end position="377"/>
    </location>
</feature>
<proteinExistence type="inferred from homology"/>
<gene>
    <name evidence="1" type="primary">norW</name>
    <name evidence="1" type="synonym">flrR</name>
    <name type="ordered locus">KPN78578_29860</name>
    <name type="ORF">KPN_03046</name>
</gene>
<sequence length="377" mass="40893">MSDGIVIIGSGFAARQLVKNIRKQDAQIPLTLIAADSMDEYNKPDLSHVISRGQKADDLTLQSAGEFAEQYTLRLFPHTWVSDIDAENRLVKSHDNQWRYDKLVLATGATPFIPSVPGRELMLTLNSQREYGAAQSQLHDAKRVLIVGGGLIGCELAMDFCRAGKAVTVVDNSASVLAALMPPEASSRLQHRLTEMGVHLMLKTQLEGLEQTADGIRVSLDRQRAITVDAVVAAAGLRPETSLARHAGLQINRGIVVNSQLQTSDPAIYALGDCAEINGVVLPFLQPILLSAMCLSKNLLAQAGELKLPPMLVKVKTPDLPLHLAGDTRRDDLTWNIVAAKEGLVAKGVDAENQLRAFVVSEDKMKEAFALLKQLVS</sequence>
<protein>
    <recommendedName>
        <fullName evidence="1">Nitric oxide reductase FlRd-NAD(+) reductase</fullName>
        <ecNumber evidence="1">1.18.1.-</ecNumber>
    </recommendedName>
    <alternativeName>
        <fullName evidence="1">Flavorubredoxin reductase</fullName>
        <shortName evidence="1">FlRd-reductase</shortName>
        <shortName evidence="1">FlavoRb reductase</shortName>
    </alternativeName>
</protein>
<evidence type="ECO:0000255" key="1">
    <source>
        <dbReference type="HAMAP-Rule" id="MF_01313"/>
    </source>
</evidence>
<keyword id="KW-0963">Cytoplasm</keyword>
<keyword id="KW-0274">FAD</keyword>
<keyword id="KW-0285">Flavoprotein</keyword>
<keyword id="KW-0520">NAD</keyword>
<keyword id="KW-0560">Oxidoreductase</keyword>
<reference key="1">
    <citation type="submission" date="2006-09" db="EMBL/GenBank/DDBJ databases">
        <authorList>
            <consortium name="The Klebsiella pneumonia Genome Sequencing Project"/>
            <person name="McClelland M."/>
            <person name="Sanderson E.K."/>
            <person name="Spieth J."/>
            <person name="Clifton W.S."/>
            <person name="Latreille P."/>
            <person name="Sabo A."/>
            <person name="Pepin K."/>
            <person name="Bhonagiri V."/>
            <person name="Porwollik S."/>
            <person name="Ali J."/>
            <person name="Wilson R.K."/>
        </authorList>
    </citation>
    <scope>NUCLEOTIDE SEQUENCE [LARGE SCALE GENOMIC DNA]</scope>
    <source>
        <strain>ATCC 700721 / MGH 78578</strain>
    </source>
</reference>
<accession>A6TCX6</accession>
<name>NORW_KLEP7</name>
<dbReference type="EC" id="1.18.1.-" evidence="1"/>
<dbReference type="EMBL" id="CP000647">
    <property type="protein sequence ID" value="ABR78447.1"/>
    <property type="molecule type" value="Genomic_DNA"/>
</dbReference>
<dbReference type="RefSeq" id="WP_004890235.1">
    <property type="nucleotide sequence ID" value="NC_009648.1"/>
</dbReference>
<dbReference type="SMR" id="A6TCX6"/>
<dbReference type="STRING" id="272620.KPN_03046"/>
<dbReference type="PaxDb" id="272620-KPN_03046"/>
<dbReference type="EnsemblBacteria" id="ABR78447">
    <property type="protein sequence ID" value="ABR78447"/>
    <property type="gene ID" value="KPN_03046"/>
</dbReference>
<dbReference type="KEGG" id="kpn:KPN_03046"/>
<dbReference type="HOGENOM" id="CLU_003291_4_4_6"/>
<dbReference type="UniPathway" id="UPA00638"/>
<dbReference type="Proteomes" id="UP000000265">
    <property type="component" value="Chromosome"/>
</dbReference>
<dbReference type="GO" id="GO:0005737">
    <property type="term" value="C:cytoplasm"/>
    <property type="evidence" value="ECO:0007669"/>
    <property type="project" value="UniProtKB-SubCell"/>
</dbReference>
<dbReference type="GO" id="GO:0016731">
    <property type="term" value="F:oxidoreductase activity, acting on iron-sulfur proteins as donors, NAD or NADP as acceptor"/>
    <property type="evidence" value="ECO:0007669"/>
    <property type="project" value="UniProtKB-UniRule"/>
</dbReference>
<dbReference type="Gene3D" id="3.30.390.120">
    <property type="match status" value="1"/>
</dbReference>
<dbReference type="Gene3D" id="3.50.50.60">
    <property type="entry name" value="FAD/NAD(P)-binding domain"/>
    <property type="match status" value="2"/>
</dbReference>
<dbReference type="HAMAP" id="MF_01313">
    <property type="entry name" value="NorW"/>
    <property type="match status" value="1"/>
</dbReference>
<dbReference type="InterPro" id="IPR050260">
    <property type="entry name" value="FAD-bd_OxRdtase"/>
</dbReference>
<dbReference type="InterPro" id="IPR036188">
    <property type="entry name" value="FAD/NAD-bd_sf"/>
</dbReference>
<dbReference type="InterPro" id="IPR023753">
    <property type="entry name" value="FAD/NAD-binding_dom"/>
</dbReference>
<dbReference type="InterPro" id="IPR023961">
    <property type="entry name" value="NO_rdtase_NorW"/>
</dbReference>
<dbReference type="InterPro" id="IPR041364">
    <property type="entry name" value="Rbx-bd"/>
</dbReference>
<dbReference type="NCBIfam" id="NF003437">
    <property type="entry name" value="PRK04965.1"/>
    <property type="match status" value="1"/>
</dbReference>
<dbReference type="PANTHER" id="PTHR43429:SF3">
    <property type="entry name" value="NITRITE REDUCTASE [NAD(P)H]"/>
    <property type="match status" value="1"/>
</dbReference>
<dbReference type="PANTHER" id="PTHR43429">
    <property type="entry name" value="PYRIDINE NUCLEOTIDE-DISULFIDE OXIDOREDUCTASE DOMAIN-CONTAINING"/>
    <property type="match status" value="1"/>
</dbReference>
<dbReference type="Pfam" id="PF07992">
    <property type="entry name" value="Pyr_redox_2"/>
    <property type="match status" value="1"/>
</dbReference>
<dbReference type="Pfam" id="PF18113">
    <property type="entry name" value="Rbx_binding"/>
    <property type="match status" value="1"/>
</dbReference>
<dbReference type="PRINTS" id="PR00368">
    <property type="entry name" value="FADPNR"/>
</dbReference>
<dbReference type="PRINTS" id="PR00411">
    <property type="entry name" value="PNDRDTASEI"/>
</dbReference>
<dbReference type="SUPFAM" id="SSF51905">
    <property type="entry name" value="FAD/NAD(P)-binding domain"/>
    <property type="match status" value="1"/>
</dbReference>